<protein>
    <recommendedName>
        <fullName evidence="1">Leucine--tRNA ligase</fullName>
        <ecNumber evidence="1">6.1.1.4</ecNumber>
    </recommendedName>
    <alternativeName>
        <fullName evidence="1">Leucyl-tRNA synthetase</fullName>
        <shortName evidence="1">LeuRS</shortName>
    </alternativeName>
</protein>
<sequence>MAYDHKTIEKKWQKFWKKNETFKADLNKDQKKYYALDMFPYPSGQGLHVGHPEGYTATDVMSRMKRMQGFNVLHPMGWDAFGLPAEQYALKTGHNPKDFTNKNIDHFRDQIQSLGFSYDWDREVNTTDPKFYKWTQWIFEQLYKKGLAYESEIMVNWAPDFMGGTVVANEEVEDGKTKRGGYPVYRKPMRQWVLKITAYADRLIDDLDLVDWPESVKEMQRNWIGRSEGASVFFPVVGDEDTKIEVFTTRADTLFGASYVVLAPEQELVDQLTTPEHKAEVEKYKEEASRRSDLERTDLNKDKTGVFTGSYVINPVNGEKLPIWISDYVLASYGTGAVMAVPSGDQRDYDFATKFNLPIKPIIEGADISEGAFDGDGKHINSGFLDGLNIADAKQKMIDWLEEHDAGHKKVNYRLRDWIFSRQRYWGEPIPVIHWDDGTTSLVPEDELPLELPKTDNIEPSGTGESPLANVEDWVNVYDENGRHGLRETNTMPQWAGSSWYWLRYTDPHNDEEFASKEALDYWSPVDLYVGGAEHAVLHLLYARFWHKVLYDLGLVPTKEPFMKLVNQGMILGSNHEKMSKSKGNVVNPDDIVDQYGADTLRLYEMFMGPLEESVPWDEKGLHGANKWVQRVWRLLMDDNNHLRDRVSTFNDGKLTKVYNQTVKKVTEDYERMHFNTAISQLMVFVNEAYKVDDLPVEYMKGFVKMIAPIMPHMAEELWSQFGESDTITYQPWPTYDPKALVEDEVEMIVQVNGKVRAKIKMAKDTDRDEAQQLALANEHVKKFTDGKDIKKVIVVPNKIVNIVAK</sequence>
<name>SYL_LIMRD</name>
<accession>A5VL28</accession>
<organism>
    <name type="scientific">Limosilactobacillus reuteri (strain DSM 20016)</name>
    <name type="common">Lactobacillus reuteri</name>
    <dbReference type="NCBI Taxonomy" id="557436"/>
    <lineage>
        <taxon>Bacteria</taxon>
        <taxon>Bacillati</taxon>
        <taxon>Bacillota</taxon>
        <taxon>Bacilli</taxon>
        <taxon>Lactobacillales</taxon>
        <taxon>Lactobacillaceae</taxon>
        <taxon>Limosilactobacillus</taxon>
    </lineage>
</organism>
<evidence type="ECO:0000255" key="1">
    <source>
        <dbReference type="HAMAP-Rule" id="MF_00049"/>
    </source>
</evidence>
<proteinExistence type="inferred from homology"/>
<keyword id="KW-0030">Aminoacyl-tRNA synthetase</keyword>
<keyword id="KW-0067">ATP-binding</keyword>
<keyword id="KW-0963">Cytoplasm</keyword>
<keyword id="KW-0436">Ligase</keyword>
<keyword id="KW-0547">Nucleotide-binding</keyword>
<keyword id="KW-0648">Protein biosynthesis</keyword>
<keyword id="KW-1185">Reference proteome</keyword>
<comment type="catalytic activity">
    <reaction evidence="1">
        <text>tRNA(Leu) + L-leucine + ATP = L-leucyl-tRNA(Leu) + AMP + diphosphate</text>
        <dbReference type="Rhea" id="RHEA:11688"/>
        <dbReference type="Rhea" id="RHEA-COMP:9613"/>
        <dbReference type="Rhea" id="RHEA-COMP:9622"/>
        <dbReference type="ChEBI" id="CHEBI:30616"/>
        <dbReference type="ChEBI" id="CHEBI:33019"/>
        <dbReference type="ChEBI" id="CHEBI:57427"/>
        <dbReference type="ChEBI" id="CHEBI:78442"/>
        <dbReference type="ChEBI" id="CHEBI:78494"/>
        <dbReference type="ChEBI" id="CHEBI:456215"/>
        <dbReference type="EC" id="6.1.1.4"/>
    </reaction>
</comment>
<comment type="subcellular location">
    <subcellularLocation>
        <location evidence="1">Cytoplasm</location>
    </subcellularLocation>
</comment>
<comment type="similarity">
    <text evidence="1">Belongs to the class-I aminoacyl-tRNA synthetase family.</text>
</comment>
<reference key="1">
    <citation type="journal article" date="2011" name="PLoS Genet.">
        <title>The evolution of host specialization in the vertebrate gut symbiont Lactobacillus reuteri.</title>
        <authorList>
            <person name="Frese S.A."/>
            <person name="Benson A.K."/>
            <person name="Tannock G.W."/>
            <person name="Loach D.M."/>
            <person name="Kim J."/>
            <person name="Zhang M."/>
            <person name="Oh P.L."/>
            <person name="Heng N.C."/>
            <person name="Patil P.B."/>
            <person name="Juge N."/>
            <person name="Mackenzie D.A."/>
            <person name="Pearson B.M."/>
            <person name="Lapidus A."/>
            <person name="Dalin E."/>
            <person name="Tice H."/>
            <person name="Goltsman E."/>
            <person name="Land M."/>
            <person name="Hauser L."/>
            <person name="Ivanova N."/>
            <person name="Kyrpides N.C."/>
            <person name="Walter J."/>
        </authorList>
    </citation>
    <scope>NUCLEOTIDE SEQUENCE [LARGE SCALE GENOMIC DNA]</scope>
    <source>
        <strain>DSM 20016</strain>
    </source>
</reference>
<feature type="chain" id="PRO_1000057345" description="Leucine--tRNA ligase">
    <location>
        <begin position="1"/>
        <end position="806"/>
    </location>
</feature>
<feature type="short sequence motif" description="'HIGH' region">
    <location>
        <begin position="40"/>
        <end position="51"/>
    </location>
</feature>
<feature type="short sequence motif" description="'KMSKS' region">
    <location>
        <begin position="578"/>
        <end position="582"/>
    </location>
</feature>
<feature type="binding site" evidence="1">
    <location>
        <position position="581"/>
    </location>
    <ligand>
        <name>ATP</name>
        <dbReference type="ChEBI" id="CHEBI:30616"/>
    </ligand>
</feature>
<gene>
    <name evidence="1" type="primary">leuS</name>
    <name type="ordered locus">Lreu_1295</name>
</gene>
<dbReference type="EC" id="6.1.1.4" evidence="1"/>
<dbReference type="EMBL" id="CP000705">
    <property type="protein sequence ID" value="ABQ83552.1"/>
    <property type="molecule type" value="Genomic_DNA"/>
</dbReference>
<dbReference type="RefSeq" id="WP_003668546.1">
    <property type="nucleotide sequence ID" value="NC_009513.1"/>
</dbReference>
<dbReference type="SMR" id="A5VL28"/>
<dbReference type="STRING" id="557436.Lreu_1295"/>
<dbReference type="KEGG" id="lre:Lreu_1295"/>
<dbReference type="PATRIC" id="fig|557436.17.peg.568"/>
<dbReference type="eggNOG" id="COG0495">
    <property type="taxonomic scope" value="Bacteria"/>
</dbReference>
<dbReference type="HOGENOM" id="CLU_004427_0_0_9"/>
<dbReference type="Proteomes" id="UP000001991">
    <property type="component" value="Chromosome"/>
</dbReference>
<dbReference type="GO" id="GO:0005829">
    <property type="term" value="C:cytosol"/>
    <property type="evidence" value="ECO:0007669"/>
    <property type="project" value="TreeGrafter"/>
</dbReference>
<dbReference type="GO" id="GO:0002161">
    <property type="term" value="F:aminoacyl-tRNA deacylase activity"/>
    <property type="evidence" value="ECO:0007669"/>
    <property type="project" value="InterPro"/>
</dbReference>
<dbReference type="GO" id="GO:0005524">
    <property type="term" value="F:ATP binding"/>
    <property type="evidence" value="ECO:0007669"/>
    <property type="project" value="UniProtKB-UniRule"/>
</dbReference>
<dbReference type="GO" id="GO:0004823">
    <property type="term" value="F:leucine-tRNA ligase activity"/>
    <property type="evidence" value="ECO:0007669"/>
    <property type="project" value="UniProtKB-UniRule"/>
</dbReference>
<dbReference type="GO" id="GO:0006429">
    <property type="term" value="P:leucyl-tRNA aminoacylation"/>
    <property type="evidence" value="ECO:0007669"/>
    <property type="project" value="UniProtKB-UniRule"/>
</dbReference>
<dbReference type="CDD" id="cd07958">
    <property type="entry name" value="Anticodon_Ia_Leu_BEm"/>
    <property type="match status" value="1"/>
</dbReference>
<dbReference type="CDD" id="cd00812">
    <property type="entry name" value="LeuRS_core"/>
    <property type="match status" value="1"/>
</dbReference>
<dbReference type="FunFam" id="3.10.20.590:FF:000001">
    <property type="entry name" value="Leucine--tRNA ligase"/>
    <property type="match status" value="1"/>
</dbReference>
<dbReference type="FunFam" id="3.40.50.620:FF:000056">
    <property type="entry name" value="Leucine--tRNA ligase"/>
    <property type="match status" value="1"/>
</dbReference>
<dbReference type="FunFam" id="3.40.50.620:FF:000077">
    <property type="entry name" value="Leucine--tRNA ligase"/>
    <property type="match status" value="1"/>
</dbReference>
<dbReference type="FunFam" id="1.10.730.10:FF:000011">
    <property type="entry name" value="Leucine--tRNA ligase chloroplastic/mitochondrial"/>
    <property type="match status" value="1"/>
</dbReference>
<dbReference type="Gene3D" id="3.10.20.590">
    <property type="match status" value="1"/>
</dbReference>
<dbReference type="Gene3D" id="3.40.50.620">
    <property type="entry name" value="HUPs"/>
    <property type="match status" value="2"/>
</dbReference>
<dbReference type="Gene3D" id="1.10.730.10">
    <property type="entry name" value="Isoleucyl-tRNA Synthetase, Domain 1"/>
    <property type="match status" value="1"/>
</dbReference>
<dbReference type="HAMAP" id="MF_00049_B">
    <property type="entry name" value="Leu_tRNA_synth_B"/>
    <property type="match status" value="1"/>
</dbReference>
<dbReference type="InterPro" id="IPR001412">
    <property type="entry name" value="aa-tRNA-synth_I_CS"/>
</dbReference>
<dbReference type="InterPro" id="IPR002300">
    <property type="entry name" value="aa-tRNA-synth_Ia"/>
</dbReference>
<dbReference type="InterPro" id="IPR002302">
    <property type="entry name" value="Leu-tRNA-ligase"/>
</dbReference>
<dbReference type="InterPro" id="IPR025709">
    <property type="entry name" value="Leu_tRNA-synth_edit"/>
</dbReference>
<dbReference type="InterPro" id="IPR013155">
    <property type="entry name" value="M/V/L/I-tRNA-synth_anticd-bd"/>
</dbReference>
<dbReference type="InterPro" id="IPR015413">
    <property type="entry name" value="Methionyl/Leucyl_tRNA_Synth"/>
</dbReference>
<dbReference type="InterPro" id="IPR014729">
    <property type="entry name" value="Rossmann-like_a/b/a_fold"/>
</dbReference>
<dbReference type="InterPro" id="IPR009080">
    <property type="entry name" value="tRNAsynth_Ia_anticodon-bd"/>
</dbReference>
<dbReference type="InterPro" id="IPR009008">
    <property type="entry name" value="Val/Leu/Ile-tRNA-synth_edit"/>
</dbReference>
<dbReference type="NCBIfam" id="TIGR00396">
    <property type="entry name" value="leuS_bact"/>
    <property type="match status" value="1"/>
</dbReference>
<dbReference type="PANTHER" id="PTHR43740:SF2">
    <property type="entry name" value="LEUCINE--TRNA LIGASE, MITOCHONDRIAL"/>
    <property type="match status" value="1"/>
</dbReference>
<dbReference type="PANTHER" id="PTHR43740">
    <property type="entry name" value="LEUCYL-TRNA SYNTHETASE"/>
    <property type="match status" value="1"/>
</dbReference>
<dbReference type="Pfam" id="PF08264">
    <property type="entry name" value="Anticodon_1"/>
    <property type="match status" value="1"/>
</dbReference>
<dbReference type="Pfam" id="PF00133">
    <property type="entry name" value="tRNA-synt_1"/>
    <property type="match status" value="1"/>
</dbReference>
<dbReference type="Pfam" id="PF13603">
    <property type="entry name" value="tRNA-synt_1_2"/>
    <property type="match status" value="1"/>
</dbReference>
<dbReference type="Pfam" id="PF09334">
    <property type="entry name" value="tRNA-synt_1g"/>
    <property type="match status" value="1"/>
</dbReference>
<dbReference type="PRINTS" id="PR00985">
    <property type="entry name" value="TRNASYNTHLEU"/>
</dbReference>
<dbReference type="SUPFAM" id="SSF47323">
    <property type="entry name" value="Anticodon-binding domain of a subclass of class I aminoacyl-tRNA synthetases"/>
    <property type="match status" value="1"/>
</dbReference>
<dbReference type="SUPFAM" id="SSF52374">
    <property type="entry name" value="Nucleotidylyl transferase"/>
    <property type="match status" value="1"/>
</dbReference>
<dbReference type="SUPFAM" id="SSF50677">
    <property type="entry name" value="ValRS/IleRS/LeuRS editing domain"/>
    <property type="match status" value="1"/>
</dbReference>
<dbReference type="PROSITE" id="PS00178">
    <property type="entry name" value="AA_TRNA_LIGASE_I"/>
    <property type="match status" value="1"/>
</dbReference>